<accession>Q48412</accession>
<proteinExistence type="predicted"/>
<organism>
    <name type="scientific">Klebsiella pneumoniae</name>
    <dbReference type="NCBI Taxonomy" id="573"/>
    <lineage>
        <taxon>Bacteria</taxon>
        <taxon>Pseudomonadati</taxon>
        <taxon>Pseudomonadota</taxon>
        <taxon>Gammaproteobacteria</taxon>
        <taxon>Enterobacterales</taxon>
        <taxon>Enterobacteriaceae</taxon>
        <taxon>Klebsiella/Raoultella group</taxon>
        <taxon>Klebsiella</taxon>
        <taxon>Klebsiella pneumoniae complex</taxon>
    </lineage>
</organism>
<keyword id="KW-0998">Cell outer membrane</keyword>
<keyword id="KW-0472">Membrane</keyword>
<sequence length="132" mass="14745">VPASDQLTVHVLPARHFSGRGLKRNQTLWASFLFVTPQQKIYYSGDSGYGPHFKAIGDEFGPVDLAIMENGQYDQDWKYIHMMPDETAQAADDLRARAVLPGHAGRSFWRNTAGMNRINGWRLPAKEGPGVC</sequence>
<name>ROMA_KLEPN</name>
<evidence type="ECO:0000305" key="1"/>
<dbReference type="EMBL" id="U19581">
    <property type="protein sequence ID" value="AAA85696.1"/>
    <property type="molecule type" value="Genomic_DNA"/>
</dbReference>
<dbReference type="PIR" id="T09626">
    <property type="entry name" value="T09626"/>
</dbReference>
<dbReference type="SMR" id="Q48412"/>
<dbReference type="PHI-base" id="PHI:7476"/>
<dbReference type="GO" id="GO:0009279">
    <property type="term" value="C:cell outer membrane"/>
    <property type="evidence" value="ECO:0007669"/>
    <property type="project" value="UniProtKB-SubCell"/>
</dbReference>
<dbReference type="GO" id="GO:0005737">
    <property type="term" value="C:cytoplasm"/>
    <property type="evidence" value="ECO:0007669"/>
    <property type="project" value="TreeGrafter"/>
</dbReference>
<dbReference type="Gene3D" id="3.60.15.10">
    <property type="entry name" value="Ribonuclease Z/Hydroxyacylglutathione hydrolase-like"/>
    <property type="match status" value="1"/>
</dbReference>
<dbReference type="InterPro" id="IPR001279">
    <property type="entry name" value="Metallo-B-lactamas"/>
</dbReference>
<dbReference type="InterPro" id="IPR036866">
    <property type="entry name" value="RibonucZ/Hydroxyglut_hydro"/>
</dbReference>
<dbReference type="PANTHER" id="PTHR15032">
    <property type="entry name" value="N-ACYL-PHOSPHATIDYLETHANOLAMINE-HYDROLYZING PHOSPHOLIPASE D"/>
    <property type="match status" value="1"/>
</dbReference>
<dbReference type="PANTHER" id="PTHR15032:SF4">
    <property type="entry name" value="N-ACYL-PHOSPHATIDYLETHANOLAMINE-HYDROLYZING PHOSPHOLIPASE D"/>
    <property type="match status" value="1"/>
</dbReference>
<dbReference type="Pfam" id="PF12706">
    <property type="entry name" value="Lactamase_B_2"/>
    <property type="match status" value="1"/>
</dbReference>
<dbReference type="SUPFAM" id="SSF56281">
    <property type="entry name" value="Metallo-hydrolase/oxidoreductase"/>
    <property type="match status" value="1"/>
</dbReference>
<feature type="chain" id="PRO_0000097404" description="Outer membrane protein RomA">
    <location>
        <begin position="1" status="less than"/>
        <end position="132"/>
    </location>
</feature>
<feature type="non-terminal residue">
    <location>
        <position position="1"/>
    </location>
</feature>
<gene>
    <name type="primary">romA</name>
</gene>
<protein>
    <recommendedName>
        <fullName>Outer membrane protein RomA</fullName>
    </recommendedName>
</protein>
<comment type="subcellular location">
    <subcellularLocation>
        <location>Cell outer membrane</location>
    </subcellularLocation>
</comment>
<comment type="similarity">
    <text evidence="1">To M.tuberculosis Rv0906.</text>
</comment>
<reference key="1">
    <citation type="journal article" date="1995" name="Microbiology">
        <title>Multidrug resistance in Klebsiella pneumoniae: a novel gene, ramA, confers a multidrug resistance phenotype in Escherichia coli.</title>
        <authorList>
            <person name="George A.M."/>
            <person name="Hall R.M."/>
            <person name="Stokes H.W."/>
        </authorList>
    </citation>
    <scope>NUCLEOTIDE SEQUENCE [GENOMIC DNA]</scope>
    <source>
        <strain>ECL8</strain>
    </source>
</reference>